<comment type="function">
    <text evidence="1">Functions at a post-ubiquitation step in the ubiquitin fusion degradation (UFD) pathway. It is required for vegetative growth (By similarity).</text>
</comment>
<comment type="similarity">
    <text evidence="3">Belongs to the UFD1 family.</text>
</comment>
<comment type="sequence caution" evidence="3">
    <conflict type="frameshift">
        <sequence resource="EMBL-CDS" id="AAB87522"/>
    </conflict>
</comment>
<protein>
    <recommendedName>
        <fullName>Ubiquitin fusion degradation protein 1</fullName>
        <shortName>UB fusion protein 1</shortName>
    </recommendedName>
</protein>
<name>UFD1_SCHPO</name>
<keyword id="KW-1185">Reference proteome</keyword>
<keyword id="KW-0833">Ubl conjugation pathway</keyword>
<feature type="chain" id="PRO_0000194988" description="Ubiquitin fusion degradation protein 1">
    <location>
        <begin position="1"/>
        <end position="342"/>
    </location>
</feature>
<feature type="region of interest" description="Disordered" evidence="2">
    <location>
        <begin position="303"/>
        <end position="342"/>
    </location>
</feature>
<proteinExistence type="evidence at transcript level"/>
<sequence length="342" mass="38226">MFGGSFFSSDDDGFSMMSQLRSAFHNNVNQRFDTRYRCYPVAMIPGEERPNVNYGGKVILPPSALEKLSRLNVSYPMLFDFENEAAEKKTHGGVLEFIAEEGRVYLPYWMMTTLSLEPGDLVRVINTDIAQGSYVKLQPQSVNFLDITDHRAVLENALRNFSTLTKSDIFEILYNDQVYQIKVIDVQPDDSRHVVSVVETDLVVDFDPPIGYEESLQKNKQQNIAGVQGTMVTKIGYDELVRQGDSNLMKGTGTKLNGKEVAEVPKINLLDVEKQECPAPLILPLGTYFFGYPYKAPSIEEDSKKDPNLFKFEGAGTSLRASRKTNGTMGKGSSDDPIDIDA</sequence>
<gene>
    <name type="primary">ufd1</name>
    <name type="ORF">SPBC16A3.09c</name>
</gene>
<organism>
    <name type="scientific">Schizosaccharomyces pombe (strain 972 / ATCC 24843)</name>
    <name type="common">Fission yeast</name>
    <dbReference type="NCBI Taxonomy" id="284812"/>
    <lineage>
        <taxon>Eukaryota</taxon>
        <taxon>Fungi</taxon>
        <taxon>Dikarya</taxon>
        <taxon>Ascomycota</taxon>
        <taxon>Taphrinomycotina</taxon>
        <taxon>Schizosaccharomycetes</taxon>
        <taxon>Schizosaccharomycetales</taxon>
        <taxon>Schizosaccharomycetaceae</taxon>
        <taxon>Schizosaccharomyces</taxon>
    </lineage>
</organism>
<dbReference type="EMBL" id="AJ005825">
    <property type="protein sequence ID" value="CAA06722.1"/>
    <property type="molecule type" value="mRNA"/>
</dbReference>
<dbReference type="EMBL" id="AJ005824">
    <property type="protein sequence ID" value="CAA06721.1"/>
    <property type="molecule type" value="Genomic_DNA"/>
</dbReference>
<dbReference type="EMBL" id="CU329671">
    <property type="protein sequence ID" value="CAB59876.1"/>
    <property type="molecule type" value="Genomic_DNA"/>
</dbReference>
<dbReference type="EMBL" id="AF034137">
    <property type="protein sequence ID" value="AAB87522.1"/>
    <property type="status" value="ALT_FRAME"/>
    <property type="molecule type" value="mRNA"/>
</dbReference>
<dbReference type="PIR" id="T43554">
    <property type="entry name" value="T43554"/>
</dbReference>
<dbReference type="PIR" id="T43667">
    <property type="entry name" value="T43667"/>
</dbReference>
<dbReference type="RefSeq" id="NP_596780.1">
    <property type="nucleotide sequence ID" value="NM_001023801.2"/>
</dbReference>
<dbReference type="SMR" id="O42915"/>
<dbReference type="BioGRID" id="276180">
    <property type="interactions" value="15"/>
</dbReference>
<dbReference type="FunCoup" id="O42915">
    <property type="interactions" value="727"/>
</dbReference>
<dbReference type="STRING" id="284812.O42915"/>
<dbReference type="iPTMnet" id="O42915"/>
<dbReference type="PaxDb" id="4896-SPBC16A3.09c.1"/>
<dbReference type="EnsemblFungi" id="SPBC16A3.09c.1">
    <property type="protein sequence ID" value="SPBC16A3.09c.1:pep"/>
    <property type="gene ID" value="SPBC16A3.09c"/>
</dbReference>
<dbReference type="GeneID" id="2539623"/>
<dbReference type="KEGG" id="spo:2539623"/>
<dbReference type="PomBase" id="SPBC16A3.09c">
    <property type="gene designation" value="ufd1"/>
</dbReference>
<dbReference type="VEuPathDB" id="FungiDB:SPBC16A3.09c"/>
<dbReference type="eggNOG" id="KOG1816">
    <property type="taxonomic scope" value="Eukaryota"/>
</dbReference>
<dbReference type="HOGENOM" id="CLU_037790_1_0_1"/>
<dbReference type="InParanoid" id="O42915"/>
<dbReference type="OMA" id="VCMIETD"/>
<dbReference type="PhylomeDB" id="O42915"/>
<dbReference type="Reactome" id="R-SPO-110320">
    <property type="pathway name" value="Translesion Synthesis by POLH"/>
</dbReference>
<dbReference type="Reactome" id="R-SPO-8951664">
    <property type="pathway name" value="Neddylation"/>
</dbReference>
<dbReference type="Reactome" id="R-SPO-9755511">
    <property type="pathway name" value="KEAP1-NFE2L2 pathway"/>
</dbReference>
<dbReference type="PRO" id="PR:O42915"/>
<dbReference type="Proteomes" id="UP000002485">
    <property type="component" value="Chromosome II"/>
</dbReference>
<dbReference type="GO" id="GO:0005829">
    <property type="term" value="C:cytosol"/>
    <property type="evidence" value="ECO:0007005"/>
    <property type="project" value="PomBase"/>
</dbReference>
<dbReference type="GO" id="GO:0000836">
    <property type="term" value="C:Hrd1p ubiquitin ligase complex"/>
    <property type="evidence" value="ECO:0000266"/>
    <property type="project" value="PomBase"/>
</dbReference>
<dbReference type="GO" id="GO:0005634">
    <property type="term" value="C:nucleus"/>
    <property type="evidence" value="ECO:0007005"/>
    <property type="project" value="PomBase"/>
</dbReference>
<dbReference type="GO" id="GO:1990112">
    <property type="term" value="C:RQC complex"/>
    <property type="evidence" value="ECO:0000266"/>
    <property type="project" value="PomBase"/>
</dbReference>
<dbReference type="GO" id="GO:0034098">
    <property type="term" value="C:VCP-NPL4-UFD1 AAA ATPase complex"/>
    <property type="evidence" value="ECO:0000318"/>
    <property type="project" value="GO_Central"/>
</dbReference>
<dbReference type="GO" id="GO:0031593">
    <property type="term" value="F:polyubiquitin modification-dependent protein binding"/>
    <property type="evidence" value="ECO:0000318"/>
    <property type="project" value="GO_Central"/>
</dbReference>
<dbReference type="GO" id="GO:0032183">
    <property type="term" value="F:SUMO binding"/>
    <property type="evidence" value="ECO:0000353"/>
    <property type="project" value="PomBase"/>
</dbReference>
<dbReference type="GO" id="GO:0036503">
    <property type="term" value="P:ERAD pathway"/>
    <property type="evidence" value="ECO:0000318"/>
    <property type="project" value="GO_Central"/>
</dbReference>
<dbReference type="GO" id="GO:1990116">
    <property type="term" value="P:ribosome-associated ubiquitin-dependent protein catabolic process"/>
    <property type="evidence" value="ECO:0000266"/>
    <property type="project" value="PomBase"/>
</dbReference>
<dbReference type="GO" id="GO:0032933">
    <property type="term" value="P:SREBP signaling pathway"/>
    <property type="evidence" value="ECO:0000315"/>
    <property type="project" value="PomBase"/>
</dbReference>
<dbReference type="FunFam" id="2.40.40.50:FF:000001">
    <property type="entry name" value="Ubiquitin fusion degradation protein 1 homolog"/>
    <property type="match status" value="1"/>
</dbReference>
<dbReference type="Gene3D" id="3.10.330.10">
    <property type="match status" value="1"/>
</dbReference>
<dbReference type="Gene3D" id="2.40.40.50">
    <property type="entry name" value="Ubiquitin fusion degradation protein UFD1, N-terminal domain"/>
    <property type="match status" value="1"/>
</dbReference>
<dbReference type="InterPro" id="IPR004854">
    <property type="entry name" value="Ufd1-like"/>
</dbReference>
<dbReference type="InterPro" id="IPR042299">
    <property type="entry name" value="Ufd1-like_Nn"/>
</dbReference>
<dbReference type="InterPro" id="IPR055417">
    <property type="entry name" value="UFD1_N1"/>
</dbReference>
<dbReference type="InterPro" id="IPR055418">
    <property type="entry name" value="UFD1_N2"/>
</dbReference>
<dbReference type="PANTHER" id="PTHR12555">
    <property type="entry name" value="UBIQUITIN FUSION DEGRADATON PROTEIN 1"/>
    <property type="match status" value="1"/>
</dbReference>
<dbReference type="PANTHER" id="PTHR12555:SF13">
    <property type="entry name" value="UBIQUITIN RECOGNITION FACTOR IN ER-ASSOCIATED DEGRADATION PROTEIN 1"/>
    <property type="match status" value="1"/>
</dbReference>
<dbReference type="Pfam" id="PF03152">
    <property type="entry name" value="UFD1_N1"/>
    <property type="match status" value="1"/>
</dbReference>
<dbReference type="Pfam" id="PF24842">
    <property type="entry name" value="UFD1_N2"/>
    <property type="match status" value="1"/>
</dbReference>
<evidence type="ECO:0000250" key="1"/>
<evidence type="ECO:0000256" key="2">
    <source>
        <dbReference type="SAM" id="MobiDB-lite"/>
    </source>
</evidence>
<evidence type="ECO:0000305" key="3"/>
<reference key="1">
    <citation type="submission" date="1998-04" db="EMBL/GenBank/DDBJ databases">
        <authorList>
            <person name="Montgomery S."/>
        </authorList>
    </citation>
    <scope>NUCLEOTIDE SEQUENCE [MRNA]</scope>
</reference>
<reference key="2">
    <citation type="submission" date="1998-04" db="EMBL/GenBank/DDBJ databases">
        <title>Genetic analysis of an S. pombe homologue of Ufd1.</title>
        <authorList>
            <person name="Labib K.P."/>
            <person name="Montgomery S."/>
            <person name="Lenhard M."/>
            <person name="Kearsey S.E."/>
        </authorList>
    </citation>
    <scope>NUCLEOTIDE SEQUENCE [GENOMIC DNA]</scope>
</reference>
<reference key="3">
    <citation type="journal article" date="2002" name="Nature">
        <title>The genome sequence of Schizosaccharomyces pombe.</title>
        <authorList>
            <person name="Wood V."/>
            <person name="Gwilliam R."/>
            <person name="Rajandream M.A."/>
            <person name="Lyne M.H."/>
            <person name="Lyne R."/>
            <person name="Stewart A."/>
            <person name="Sgouros J.G."/>
            <person name="Peat N."/>
            <person name="Hayles J."/>
            <person name="Baker S.G."/>
            <person name="Basham D."/>
            <person name="Bowman S."/>
            <person name="Brooks K."/>
            <person name="Brown D."/>
            <person name="Brown S."/>
            <person name="Chillingworth T."/>
            <person name="Churcher C.M."/>
            <person name="Collins M."/>
            <person name="Connor R."/>
            <person name="Cronin A."/>
            <person name="Davis P."/>
            <person name="Feltwell T."/>
            <person name="Fraser A."/>
            <person name="Gentles S."/>
            <person name="Goble A."/>
            <person name="Hamlin N."/>
            <person name="Harris D.E."/>
            <person name="Hidalgo J."/>
            <person name="Hodgson G."/>
            <person name="Holroyd S."/>
            <person name="Hornsby T."/>
            <person name="Howarth S."/>
            <person name="Huckle E.J."/>
            <person name="Hunt S."/>
            <person name="Jagels K."/>
            <person name="James K.D."/>
            <person name="Jones L."/>
            <person name="Jones M."/>
            <person name="Leather S."/>
            <person name="McDonald S."/>
            <person name="McLean J."/>
            <person name="Mooney P."/>
            <person name="Moule S."/>
            <person name="Mungall K.L."/>
            <person name="Murphy L.D."/>
            <person name="Niblett D."/>
            <person name="Odell C."/>
            <person name="Oliver K."/>
            <person name="O'Neil S."/>
            <person name="Pearson D."/>
            <person name="Quail M.A."/>
            <person name="Rabbinowitsch E."/>
            <person name="Rutherford K.M."/>
            <person name="Rutter S."/>
            <person name="Saunders D."/>
            <person name="Seeger K."/>
            <person name="Sharp S."/>
            <person name="Skelton J."/>
            <person name="Simmonds M.N."/>
            <person name="Squares R."/>
            <person name="Squares S."/>
            <person name="Stevens K."/>
            <person name="Taylor K."/>
            <person name="Taylor R.G."/>
            <person name="Tivey A."/>
            <person name="Walsh S.V."/>
            <person name="Warren T."/>
            <person name="Whitehead S."/>
            <person name="Woodward J.R."/>
            <person name="Volckaert G."/>
            <person name="Aert R."/>
            <person name="Robben J."/>
            <person name="Grymonprez B."/>
            <person name="Weltjens I."/>
            <person name="Vanstreels E."/>
            <person name="Rieger M."/>
            <person name="Schaefer M."/>
            <person name="Mueller-Auer S."/>
            <person name="Gabel C."/>
            <person name="Fuchs M."/>
            <person name="Duesterhoeft A."/>
            <person name="Fritzc C."/>
            <person name="Holzer E."/>
            <person name="Moestl D."/>
            <person name="Hilbert H."/>
            <person name="Borzym K."/>
            <person name="Langer I."/>
            <person name="Beck A."/>
            <person name="Lehrach H."/>
            <person name="Reinhardt R."/>
            <person name="Pohl T.M."/>
            <person name="Eger P."/>
            <person name="Zimmermann W."/>
            <person name="Wedler H."/>
            <person name="Wambutt R."/>
            <person name="Purnelle B."/>
            <person name="Goffeau A."/>
            <person name="Cadieu E."/>
            <person name="Dreano S."/>
            <person name="Gloux S."/>
            <person name="Lelaure V."/>
            <person name="Mottier S."/>
            <person name="Galibert F."/>
            <person name="Aves S.J."/>
            <person name="Xiang Z."/>
            <person name="Hunt C."/>
            <person name="Moore K."/>
            <person name="Hurst S.M."/>
            <person name="Lucas M."/>
            <person name="Rochet M."/>
            <person name="Gaillardin C."/>
            <person name="Tallada V.A."/>
            <person name="Garzon A."/>
            <person name="Thode G."/>
            <person name="Daga R.R."/>
            <person name="Cruzado L."/>
            <person name="Jimenez J."/>
            <person name="Sanchez M."/>
            <person name="del Rey F."/>
            <person name="Benito J."/>
            <person name="Dominguez A."/>
            <person name="Revuelta J.L."/>
            <person name="Moreno S."/>
            <person name="Armstrong J."/>
            <person name="Forsburg S.L."/>
            <person name="Cerutti L."/>
            <person name="Lowe T."/>
            <person name="McCombie W.R."/>
            <person name="Paulsen I."/>
            <person name="Potashkin J."/>
            <person name="Shpakovski G.V."/>
            <person name="Ussery D."/>
            <person name="Barrell B.G."/>
            <person name="Nurse P."/>
        </authorList>
    </citation>
    <scope>NUCLEOTIDE SEQUENCE [LARGE SCALE GENOMIC DNA]</scope>
    <source>
        <strain>972 / ATCC 24843</strain>
    </source>
</reference>
<reference key="4">
    <citation type="submission" date="1997-11" db="EMBL/GenBank/DDBJ databases">
        <authorList>
            <person name="Pelletier M.F."/>
        </authorList>
    </citation>
    <scope>NUCLEOTIDE SEQUENCE [MRNA] OF 89-294</scope>
    <source>
        <strain>358</strain>
    </source>
</reference>
<accession>O42915</accession>
<accession>O13409</accession>
<accession>O60193</accession>
<accession>Q1MVD5</accession>